<proteinExistence type="inferred from homology"/>
<sequence>MTQSSAQGTRLDTQRTIRAPRGTQLRAKSWLTEAPLRMLMNNLDPDVAEHPHALVVYGGIGRAARNWECFDKIVEVLERLEDDQTLLVQSGKPVGVFPTHKNAPRVLIANSNLVPHWANWEHFNELDKQGLMMYGQMTAGSWIYIGSQGIVQGTYETFVAVAKKHFNGDAKGRWVLTGGLGGMGGAQPLAATMAGFSMIAVECDESRIDYRLRTGYVDKKANTLDEALAMIADTDRPISVGLLGNAADIFPELVKRNITPDVVTDQTSAHDPLNGYLPLGWSMEKAAQMRQQNEAEVVKAAKASMAIQVRAMLDLQTRGAATLDYGNNIRQMALEEGVANAFDFPGFVPAYIRPLFCEGIGPFRWAALSGDPEDIYKTDQKVKELIPDNPHLHNWLDMARERIHFQGLPARICWVGLKDRARLGLAFNEMVKNGELKAPIVIGRDHLDSGSVASPNRETEGMLDGSDAVSDWPLLNALLNTAGGATWVSLHHGGGVGMGFSQHSGMVICCDGSDDAAERIARVLHNDPATGVMRHADAGYEIAKRCAQQQKLDLPMLNAELAKLK</sequence>
<gene>
    <name evidence="1" type="primary">hutU</name>
    <name type="ordered locus">VCM66_1158</name>
</gene>
<comment type="function">
    <text evidence="1">Catalyzes the conversion of urocanate to 4-imidazolone-5-propionate.</text>
</comment>
<comment type="catalytic activity">
    <reaction evidence="1">
        <text>4-imidazolone-5-propanoate = trans-urocanate + H2O</text>
        <dbReference type="Rhea" id="RHEA:13101"/>
        <dbReference type="ChEBI" id="CHEBI:15377"/>
        <dbReference type="ChEBI" id="CHEBI:17771"/>
        <dbReference type="ChEBI" id="CHEBI:77893"/>
        <dbReference type="EC" id="4.2.1.49"/>
    </reaction>
</comment>
<comment type="cofactor">
    <cofactor evidence="1">
        <name>NAD(+)</name>
        <dbReference type="ChEBI" id="CHEBI:57540"/>
    </cofactor>
    <text evidence="1">Binds 1 NAD(+) per subunit.</text>
</comment>
<comment type="pathway">
    <text evidence="1">Amino-acid degradation; L-histidine degradation into L-glutamate; N-formimidoyl-L-glutamate from L-histidine: step 2/3.</text>
</comment>
<comment type="subcellular location">
    <subcellularLocation>
        <location evidence="1">Cytoplasm</location>
    </subcellularLocation>
</comment>
<comment type="similarity">
    <text evidence="1">Belongs to the urocanase family.</text>
</comment>
<keyword id="KW-0963">Cytoplasm</keyword>
<keyword id="KW-0369">Histidine metabolism</keyword>
<keyword id="KW-0456">Lyase</keyword>
<keyword id="KW-0520">NAD</keyword>
<dbReference type="EC" id="4.2.1.49" evidence="1"/>
<dbReference type="EMBL" id="CP001233">
    <property type="protein sequence ID" value="ACP05475.1"/>
    <property type="molecule type" value="Genomic_DNA"/>
</dbReference>
<dbReference type="RefSeq" id="WP_000194594.1">
    <property type="nucleotide sequence ID" value="NC_012578.1"/>
</dbReference>
<dbReference type="SMR" id="C3LLP9"/>
<dbReference type="KEGG" id="vcm:VCM66_1158"/>
<dbReference type="HOGENOM" id="CLU_018868_0_1_6"/>
<dbReference type="UniPathway" id="UPA00379">
    <property type="reaction ID" value="UER00550"/>
</dbReference>
<dbReference type="Proteomes" id="UP000001217">
    <property type="component" value="Chromosome I"/>
</dbReference>
<dbReference type="GO" id="GO:0005737">
    <property type="term" value="C:cytoplasm"/>
    <property type="evidence" value="ECO:0007669"/>
    <property type="project" value="UniProtKB-SubCell"/>
</dbReference>
<dbReference type="GO" id="GO:0016153">
    <property type="term" value="F:urocanate hydratase activity"/>
    <property type="evidence" value="ECO:0007669"/>
    <property type="project" value="UniProtKB-UniRule"/>
</dbReference>
<dbReference type="GO" id="GO:0019556">
    <property type="term" value="P:L-histidine catabolic process to glutamate and formamide"/>
    <property type="evidence" value="ECO:0007669"/>
    <property type="project" value="UniProtKB-UniPathway"/>
</dbReference>
<dbReference type="GO" id="GO:0019557">
    <property type="term" value="P:L-histidine catabolic process to glutamate and formate"/>
    <property type="evidence" value="ECO:0007669"/>
    <property type="project" value="UniProtKB-UniPathway"/>
</dbReference>
<dbReference type="FunFam" id="3.40.50.10730:FF:000001">
    <property type="entry name" value="Urocanate hydratase"/>
    <property type="match status" value="1"/>
</dbReference>
<dbReference type="Gene3D" id="3.40.50.10730">
    <property type="entry name" value="Urocanase like domains"/>
    <property type="match status" value="1"/>
</dbReference>
<dbReference type="Gene3D" id="3.40.1770.10">
    <property type="entry name" value="Urocanase superfamily"/>
    <property type="match status" value="1"/>
</dbReference>
<dbReference type="HAMAP" id="MF_00577">
    <property type="entry name" value="HutU"/>
    <property type="match status" value="1"/>
</dbReference>
<dbReference type="InterPro" id="IPR055351">
    <property type="entry name" value="Urocanase"/>
</dbReference>
<dbReference type="InterPro" id="IPR023637">
    <property type="entry name" value="Urocanase-like"/>
</dbReference>
<dbReference type="InterPro" id="IPR035401">
    <property type="entry name" value="Urocanase_C"/>
</dbReference>
<dbReference type="InterPro" id="IPR038364">
    <property type="entry name" value="Urocanase_central_sf"/>
</dbReference>
<dbReference type="InterPro" id="IPR023636">
    <property type="entry name" value="Urocanase_CS"/>
</dbReference>
<dbReference type="InterPro" id="IPR035400">
    <property type="entry name" value="Urocanase_N"/>
</dbReference>
<dbReference type="InterPro" id="IPR035085">
    <property type="entry name" value="Urocanase_Rossmann-like"/>
</dbReference>
<dbReference type="InterPro" id="IPR036190">
    <property type="entry name" value="Urocanase_sf"/>
</dbReference>
<dbReference type="NCBIfam" id="TIGR01228">
    <property type="entry name" value="hutU"/>
    <property type="match status" value="1"/>
</dbReference>
<dbReference type="NCBIfam" id="NF003820">
    <property type="entry name" value="PRK05414.1"/>
    <property type="match status" value="1"/>
</dbReference>
<dbReference type="PANTHER" id="PTHR12216">
    <property type="entry name" value="UROCANATE HYDRATASE"/>
    <property type="match status" value="1"/>
</dbReference>
<dbReference type="PANTHER" id="PTHR12216:SF4">
    <property type="entry name" value="UROCANATE HYDRATASE"/>
    <property type="match status" value="1"/>
</dbReference>
<dbReference type="Pfam" id="PF01175">
    <property type="entry name" value="Urocanase"/>
    <property type="match status" value="1"/>
</dbReference>
<dbReference type="Pfam" id="PF17392">
    <property type="entry name" value="Urocanase_C"/>
    <property type="match status" value="1"/>
</dbReference>
<dbReference type="Pfam" id="PF17391">
    <property type="entry name" value="Urocanase_N"/>
    <property type="match status" value="1"/>
</dbReference>
<dbReference type="PIRSF" id="PIRSF001423">
    <property type="entry name" value="Urocanate_hydrat"/>
    <property type="match status" value="1"/>
</dbReference>
<dbReference type="SUPFAM" id="SSF111326">
    <property type="entry name" value="Urocanase"/>
    <property type="match status" value="1"/>
</dbReference>
<dbReference type="PROSITE" id="PS01233">
    <property type="entry name" value="UROCANASE"/>
    <property type="match status" value="1"/>
</dbReference>
<accession>C3LLP9</accession>
<evidence type="ECO:0000255" key="1">
    <source>
        <dbReference type="HAMAP-Rule" id="MF_00577"/>
    </source>
</evidence>
<reference key="1">
    <citation type="journal article" date="2008" name="PLoS ONE">
        <title>A recalibrated molecular clock and independent origins for the cholera pandemic clones.</title>
        <authorList>
            <person name="Feng L."/>
            <person name="Reeves P.R."/>
            <person name="Lan R."/>
            <person name="Ren Y."/>
            <person name="Gao C."/>
            <person name="Zhou Z."/>
            <person name="Ren Y."/>
            <person name="Cheng J."/>
            <person name="Wang W."/>
            <person name="Wang J."/>
            <person name="Qian W."/>
            <person name="Li D."/>
            <person name="Wang L."/>
        </authorList>
    </citation>
    <scope>NUCLEOTIDE SEQUENCE [LARGE SCALE GENOMIC DNA]</scope>
    <source>
        <strain>M66-2</strain>
    </source>
</reference>
<name>HUTU_VIBCM</name>
<protein>
    <recommendedName>
        <fullName evidence="1">Urocanate hydratase</fullName>
        <shortName evidence="1">Urocanase</shortName>
        <ecNumber evidence="1">4.2.1.49</ecNumber>
    </recommendedName>
    <alternativeName>
        <fullName evidence="1">Imidazolonepropionate hydrolase</fullName>
    </alternativeName>
</protein>
<feature type="chain" id="PRO_1000199904" description="Urocanate hydratase">
    <location>
        <begin position="1"/>
        <end position="565"/>
    </location>
</feature>
<feature type="active site" evidence="1">
    <location>
        <position position="413"/>
    </location>
</feature>
<feature type="binding site" evidence="1">
    <location>
        <begin position="58"/>
        <end position="59"/>
    </location>
    <ligand>
        <name>NAD(+)</name>
        <dbReference type="ChEBI" id="CHEBI:57540"/>
    </ligand>
</feature>
<feature type="binding site" evidence="1">
    <location>
        <position position="136"/>
    </location>
    <ligand>
        <name>NAD(+)</name>
        <dbReference type="ChEBI" id="CHEBI:57540"/>
    </ligand>
</feature>
<feature type="binding site" evidence="1">
    <location>
        <begin position="182"/>
        <end position="184"/>
    </location>
    <ligand>
        <name>NAD(+)</name>
        <dbReference type="ChEBI" id="CHEBI:57540"/>
    </ligand>
</feature>
<feature type="binding site" evidence="1">
    <location>
        <position position="202"/>
    </location>
    <ligand>
        <name>NAD(+)</name>
        <dbReference type="ChEBI" id="CHEBI:57540"/>
    </ligand>
</feature>
<feature type="binding site" evidence="1">
    <location>
        <position position="207"/>
    </location>
    <ligand>
        <name>NAD(+)</name>
        <dbReference type="ChEBI" id="CHEBI:57540"/>
    </ligand>
</feature>
<feature type="binding site" evidence="1">
    <location>
        <begin position="245"/>
        <end position="246"/>
    </location>
    <ligand>
        <name>NAD(+)</name>
        <dbReference type="ChEBI" id="CHEBI:57540"/>
    </ligand>
</feature>
<feature type="binding site" evidence="1">
    <location>
        <begin position="266"/>
        <end position="270"/>
    </location>
    <ligand>
        <name>NAD(+)</name>
        <dbReference type="ChEBI" id="CHEBI:57540"/>
    </ligand>
</feature>
<feature type="binding site" evidence="1">
    <location>
        <begin position="276"/>
        <end position="277"/>
    </location>
    <ligand>
        <name>NAD(+)</name>
        <dbReference type="ChEBI" id="CHEBI:57540"/>
    </ligand>
</feature>
<feature type="binding site" evidence="1">
    <location>
        <position position="325"/>
    </location>
    <ligand>
        <name>NAD(+)</name>
        <dbReference type="ChEBI" id="CHEBI:57540"/>
    </ligand>
</feature>
<feature type="binding site" evidence="1">
    <location>
        <position position="495"/>
    </location>
    <ligand>
        <name>NAD(+)</name>
        <dbReference type="ChEBI" id="CHEBI:57540"/>
    </ligand>
</feature>
<organism>
    <name type="scientific">Vibrio cholerae serotype O1 (strain M66-2)</name>
    <dbReference type="NCBI Taxonomy" id="579112"/>
    <lineage>
        <taxon>Bacteria</taxon>
        <taxon>Pseudomonadati</taxon>
        <taxon>Pseudomonadota</taxon>
        <taxon>Gammaproteobacteria</taxon>
        <taxon>Vibrionales</taxon>
        <taxon>Vibrionaceae</taxon>
        <taxon>Vibrio</taxon>
    </lineage>
</organism>